<organism>
    <name type="scientific">Escherichia coli (strain SMS-3-5 / SECEC)</name>
    <dbReference type="NCBI Taxonomy" id="439855"/>
    <lineage>
        <taxon>Bacteria</taxon>
        <taxon>Pseudomonadati</taxon>
        <taxon>Pseudomonadota</taxon>
        <taxon>Gammaproteobacteria</taxon>
        <taxon>Enterobacterales</taxon>
        <taxon>Enterobacteriaceae</taxon>
        <taxon>Escherichia</taxon>
    </lineage>
</organism>
<sequence length="196" mass="21757">MSSKEQKTPEGQAPEEIIMDQHEEIEAVEPEASAEQVDPRDEKIANLEAQLAEAQTRERDGILRVKAEMENLRRRTELDIEKAHKFALEKFINELLPVIDSLDRALEVADKANPDMSAMVEGIELTLKSMLDVVRKFGVEVISETNVPLDPNVHQAIAMVESDDVAPGNVLGIMQKGYTLNGRTIRAAMVTVAKAK</sequence>
<evidence type="ECO:0000255" key="1">
    <source>
        <dbReference type="HAMAP-Rule" id="MF_01151"/>
    </source>
</evidence>
<evidence type="ECO:0000256" key="2">
    <source>
        <dbReference type="SAM" id="MobiDB-lite"/>
    </source>
</evidence>
<protein>
    <recommendedName>
        <fullName evidence="1">Protein GrpE</fullName>
    </recommendedName>
    <alternativeName>
        <fullName evidence="1">HSP-70 cofactor</fullName>
    </alternativeName>
</protein>
<feature type="chain" id="PRO_1000137567" description="Protein GrpE">
    <location>
        <begin position="1"/>
        <end position="196"/>
    </location>
</feature>
<feature type="region of interest" description="Disordered" evidence="2">
    <location>
        <begin position="1"/>
        <end position="39"/>
    </location>
</feature>
<accession>B1LPC1</accession>
<proteinExistence type="inferred from homology"/>
<reference key="1">
    <citation type="journal article" date="2008" name="J. Bacteriol.">
        <title>Insights into the environmental resistance gene pool from the genome sequence of the multidrug-resistant environmental isolate Escherichia coli SMS-3-5.</title>
        <authorList>
            <person name="Fricke W.F."/>
            <person name="Wright M.S."/>
            <person name="Lindell A.H."/>
            <person name="Harkins D.M."/>
            <person name="Baker-Austin C."/>
            <person name="Ravel J."/>
            <person name="Stepanauskas R."/>
        </authorList>
    </citation>
    <scope>NUCLEOTIDE SEQUENCE [LARGE SCALE GENOMIC DNA]</scope>
    <source>
        <strain>SMS-3-5 / SECEC</strain>
    </source>
</reference>
<dbReference type="EMBL" id="CP000970">
    <property type="protein sequence ID" value="ACB17108.1"/>
    <property type="molecule type" value="Genomic_DNA"/>
</dbReference>
<dbReference type="RefSeq" id="WP_012311718.1">
    <property type="nucleotide sequence ID" value="NC_010498.1"/>
</dbReference>
<dbReference type="SMR" id="B1LPC1"/>
<dbReference type="KEGG" id="ecm:EcSMS35_2766"/>
<dbReference type="HOGENOM" id="CLU_057217_6_0_6"/>
<dbReference type="Proteomes" id="UP000007011">
    <property type="component" value="Chromosome"/>
</dbReference>
<dbReference type="GO" id="GO:0005829">
    <property type="term" value="C:cytosol"/>
    <property type="evidence" value="ECO:0007669"/>
    <property type="project" value="TreeGrafter"/>
</dbReference>
<dbReference type="GO" id="GO:0000774">
    <property type="term" value="F:adenyl-nucleotide exchange factor activity"/>
    <property type="evidence" value="ECO:0007669"/>
    <property type="project" value="InterPro"/>
</dbReference>
<dbReference type="GO" id="GO:0042803">
    <property type="term" value="F:protein homodimerization activity"/>
    <property type="evidence" value="ECO:0007669"/>
    <property type="project" value="InterPro"/>
</dbReference>
<dbReference type="GO" id="GO:0051087">
    <property type="term" value="F:protein-folding chaperone binding"/>
    <property type="evidence" value="ECO:0007669"/>
    <property type="project" value="InterPro"/>
</dbReference>
<dbReference type="GO" id="GO:0051082">
    <property type="term" value="F:unfolded protein binding"/>
    <property type="evidence" value="ECO:0007669"/>
    <property type="project" value="TreeGrafter"/>
</dbReference>
<dbReference type="GO" id="GO:0006457">
    <property type="term" value="P:protein folding"/>
    <property type="evidence" value="ECO:0007669"/>
    <property type="project" value="InterPro"/>
</dbReference>
<dbReference type="CDD" id="cd00446">
    <property type="entry name" value="GrpE"/>
    <property type="match status" value="1"/>
</dbReference>
<dbReference type="FunFam" id="2.30.22.10:FF:000001">
    <property type="entry name" value="Protein GrpE"/>
    <property type="match status" value="1"/>
</dbReference>
<dbReference type="FunFam" id="3.90.20.20:FF:000001">
    <property type="entry name" value="Protein GrpE"/>
    <property type="match status" value="1"/>
</dbReference>
<dbReference type="Gene3D" id="3.90.20.20">
    <property type="match status" value="1"/>
</dbReference>
<dbReference type="Gene3D" id="2.30.22.10">
    <property type="entry name" value="Head domain of nucleotide exchange factor GrpE"/>
    <property type="match status" value="1"/>
</dbReference>
<dbReference type="HAMAP" id="MF_01151">
    <property type="entry name" value="GrpE"/>
    <property type="match status" value="1"/>
</dbReference>
<dbReference type="InterPro" id="IPR000740">
    <property type="entry name" value="GrpE"/>
</dbReference>
<dbReference type="InterPro" id="IPR013805">
    <property type="entry name" value="GrpE_coiled_coil"/>
</dbReference>
<dbReference type="InterPro" id="IPR009012">
    <property type="entry name" value="GrpE_head"/>
</dbReference>
<dbReference type="NCBIfam" id="NF007655">
    <property type="entry name" value="PRK10325.1"/>
    <property type="match status" value="1"/>
</dbReference>
<dbReference type="NCBIfam" id="NF010738">
    <property type="entry name" value="PRK14140.1"/>
    <property type="match status" value="1"/>
</dbReference>
<dbReference type="NCBIfam" id="NF010748">
    <property type="entry name" value="PRK14150.1"/>
    <property type="match status" value="1"/>
</dbReference>
<dbReference type="PANTHER" id="PTHR21237">
    <property type="entry name" value="GRPE PROTEIN"/>
    <property type="match status" value="1"/>
</dbReference>
<dbReference type="PANTHER" id="PTHR21237:SF23">
    <property type="entry name" value="GRPE PROTEIN HOMOLOG, MITOCHONDRIAL"/>
    <property type="match status" value="1"/>
</dbReference>
<dbReference type="Pfam" id="PF01025">
    <property type="entry name" value="GrpE"/>
    <property type="match status" value="1"/>
</dbReference>
<dbReference type="PRINTS" id="PR00773">
    <property type="entry name" value="GRPEPROTEIN"/>
</dbReference>
<dbReference type="SUPFAM" id="SSF58014">
    <property type="entry name" value="Coiled-coil domain of nucleotide exchange factor GrpE"/>
    <property type="match status" value="1"/>
</dbReference>
<dbReference type="SUPFAM" id="SSF51064">
    <property type="entry name" value="Head domain of nucleotide exchange factor GrpE"/>
    <property type="match status" value="1"/>
</dbReference>
<dbReference type="PROSITE" id="PS01071">
    <property type="entry name" value="GRPE"/>
    <property type="match status" value="1"/>
</dbReference>
<comment type="function">
    <text evidence="1">Participates actively in the response to hyperosmotic and heat shock by preventing the aggregation of stress-denatured proteins, in association with DnaK and GrpE. It is the nucleotide exchange factor for DnaK and may function as a thermosensor. Unfolded proteins bind initially to DnaJ; upon interaction with the DnaJ-bound protein, DnaK hydrolyzes its bound ATP, resulting in the formation of a stable complex. GrpE releases ADP from DnaK; ATP binding to DnaK triggers the release of the substrate protein, thus completing the reaction cycle. Several rounds of ATP-dependent interactions between DnaJ, DnaK and GrpE are required for fully efficient folding.</text>
</comment>
<comment type="subunit">
    <text evidence="1">Homodimer.</text>
</comment>
<comment type="subcellular location">
    <subcellularLocation>
        <location evidence="1">Cytoplasm</location>
    </subcellularLocation>
</comment>
<comment type="similarity">
    <text evidence="1">Belongs to the GrpE family.</text>
</comment>
<gene>
    <name evidence="1" type="primary">grpE</name>
    <name type="ordered locus">EcSMS35_2766</name>
</gene>
<keyword id="KW-0143">Chaperone</keyword>
<keyword id="KW-0963">Cytoplasm</keyword>
<keyword id="KW-0346">Stress response</keyword>
<name>GRPE_ECOSM</name>